<sequence>MGKPGRSSIPSVGVHHQGPMSFPDFSASDAQIQWQRFCDLLWYHEDLGIWLDISRMHVNPSHLEQLQPGFDKAFAAMAELEAGAIANPDEQRQVGHYWLRTPQLAPNEAVRDQIATEIDQIDQFGRDVISGVIKAPGGQPFTDVLWIGIGGSGLGPLLMIRALQGHGSGLPFHFFDNVDPNGMSAVLAELDDRLATTLVVTVSKSGGTPEPHLGMEQARHRVESRGGRWADQAVAITMVDSKLDREAQQDGWLKSFSMFDWVGGRTSITSAVGLLPGALIGADIRDFLAGAAQMDDATRLADLRRNPAALMAASWFVAGDGKGRRDMVVLPYRDRLEVFSRYLQQLVMESLGKRLDRDGNEVNQGIAVYGNKGSTDQHAYVQQLRDGVDNFFATFIEVLEDVSDIPVIKDECPGDFLDGFLQGTRSALTEGGRQSLSISMRRFDARRLGALIALFERAVGFYGDLVNINAYHQPGVEAGKKAAAAILDLQSRVEAVLKDGAPRTVSEIRQAVGDGSDEAIFWIMRHLAGNDRGYRAEGDWANPASIRFSCS</sequence>
<evidence type="ECO:0000255" key="1">
    <source>
        <dbReference type="HAMAP-Rule" id="MF_00473"/>
    </source>
</evidence>
<name>G6PI_PARMW</name>
<protein>
    <recommendedName>
        <fullName evidence="1">Glucose-6-phosphate isomerase</fullName>
        <shortName evidence="1">GPI</shortName>
        <ecNumber evidence="1">5.3.1.9</ecNumber>
    </recommendedName>
    <alternativeName>
        <fullName evidence="1">Phosphoglucose isomerase</fullName>
        <shortName evidence="1">PGI</shortName>
    </alternativeName>
    <alternativeName>
        <fullName evidence="1">Phosphohexose isomerase</fullName>
        <shortName evidence="1">PHI</shortName>
    </alternativeName>
</protein>
<accession>Q7U6T0</accession>
<proteinExistence type="inferred from homology"/>
<reference key="1">
    <citation type="journal article" date="2003" name="Nature">
        <title>The genome of a motile marine Synechococcus.</title>
        <authorList>
            <person name="Palenik B."/>
            <person name="Brahamsha B."/>
            <person name="Larimer F.W."/>
            <person name="Land M.L."/>
            <person name="Hauser L."/>
            <person name="Chain P."/>
            <person name="Lamerdin J.E."/>
            <person name="Regala W."/>
            <person name="Allen E.E."/>
            <person name="McCarren J."/>
            <person name="Paulsen I.T."/>
            <person name="Dufresne A."/>
            <person name="Partensky F."/>
            <person name="Webb E.A."/>
            <person name="Waterbury J."/>
        </authorList>
    </citation>
    <scope>NUCLEOTIDE SEQUENCE [LARGE SCALE GENOMIC DNA]</scope>
    <source>
        <strain>WH8102</strain>
    </source>
</reference>
<comment type="function">
    <text evidence="1">Catalyzes the reversible isomerization of glucose-6-phosphate to fructose-6-phosphate.</text>
</comment>
<comment type="catalytic activity">
    <reaction evidence="1">
        <text>alpha-D-glucose 6-phosphate = beta-D-fructose 6-phosphate</text>
        <dbReference type="Rhea" id="RHEA:11816"/>
        <dbReference type="ChEBI" id="CHEBI:57634"/>
        <dbReference type="ChEBI" id="CHEBI:58225"/>
        <dbReference type="EC" id="5.3.1.9"/>
    </reaction>
</comment>
<comment type="pathway">
    <text evidence="1">Carbohydrate biosynthesis; gluconeogenesis.</text>
</comment>
<comment type="pathway">
    <text evidence="1">Carbohydrate degradation; glycolysis; D-glyceraldehyde 3-phosphate and glycerone phosphate from D-glucose: step 2/4.</text>
</comment>
<comment type="subcellular location">
    <subcellularLocation>
        <location evidence="1">Cytoplasm</location>
    </subcellularLocation>
</comment>
<comment type="similarity">
    <text evidence="1">Belongs to the GPI family.</text>
</comment>
<gene>
    <name evidence="1" type="primary">pgi</name>
    <name type="ordered locus">SYNW1256</name>
</gene>
<keyword id="KW-0963">Cytoplasm</keyword>
<keyword id="KW-0312">Gluconeogenesis</keyword>
<keyword id="KW-0324">Glycolysis</keyword>
<keyword id="KW-0413">Isomerase</keyword>
<feature type="chain" id="PRO_0000180754" description="Glucose-6-phosphate isomerase">
    <location>
        <begin position="1"/>
        <end position="551"/>
    </location>
</feature>
<feature type="active site" description="Proton donor" evidence="1">
    <location>
        <position position="349"/>
    </location>
</feature>
<feature type="active site" evidence="1">
    <location>
        <position position="378"/>
    </location>
</feature>
<feature type="active site" evidence="1">
    <location>
        <position position="480"/>
    </location>
</feature>
<organism>
    <name type="scientific">Parasynechococcus marenigrum (strain WH8102)</name>
    <dbReference type="NCBI Taxonomy" id="84588"/>
    <lineage>
        <taxon>Bacteria</taxon>
        <taxon>Bacillati</taxon>
        <taxon>Cyanobacteriota</taxon>
        <taxon>Cyanophyceae</taxon>
        <taxon>Synechococcales</taxon>
        <taxon>Prochlorococcaceae</taxon>
        <taxon>Parasynechococcus</taxon>
        <taxon>Parasynechococcus marenigrum</taxon>
    </lineage>
</organism>
<dbReference type="EC" id="5.3.1.9" evidence="1"/>
<dbReference type="EMBL" id="BX569692">
    <property type="protein sequence ID" value="CAE07771.1"/>
    <property type="molecule type" value="Genomic_DNA"/>
</dbReference>
<dbReference type="SMR" id="Q7U6T0"/>
<dbReference type="STRING" id="84588.SYNW1256"/>
<dbReference type="KEGG" id="syw:SYNW1256"/>
<dbReference type="eggNOG" id="COG0166">
    <property type="taxonomic scope" value="Bacteria"/>
</dbReference>
<dbReference type="HOGENOM" id="CLU_033288_0_0_3"/>
<dbReference type="UniPathway" id="UPA00109">
    <property type="reaction ID" value="UER00181"/>
</dbReference>
<dbReference type="UniPathway" id="UPA00138"/>
<dbReference type="Proteomes" id="UP000001422">
    <property type="component" value="Chromosome"/>
</dbReference>
<dbReference type="GO" id="GO:0005829">
    <property type="term" value="C:cytosol"/>
    <property type="evidence" value="ECO:0007669"/>
    <property type="project" value="TreeGrafter"/>
</dbReference>
<dbReference type="GO" id="GO:0097367">
    <property type="term" value="F:carbohydrate derivative binding"/>
    <property type="evidence" value="ECO:0007669"/>
    <property type="project" value="InterPro"/>
</dbReference>
<dbReference type="GO" id="GO:0004347">
    <property type="term" value="F:glucose-6-phosphate isomerase activity"/>
    <property type="evidence" value="ECO:0007669"/>
    <property type="project" value="UniProtKB-UniRule"/>
</dbReference>
<dbReference type="GO" id="GO:0048029">
    <property type="term" value="F:monosaccharide binding"/>
    <property type="evidence" value="ECO:0007669"/>
    <property type="project" value="TreeGrafter"/>
</dbReference>
<dbReference type="GO" id="GO:0006094">
    <property type="term" value="P:gluconeogenesis"/>
    <property type="evidence" value="ECO:0007669"/>
    <property type="project" value="UniProtKB-UniRule"/>
</dbReference>
<dbReference type="GO" id="GO:0051156">
    <property type="term" value="P:glucose 6-phosphate metabolic process"/>
    <property type="evidence" value="ECO:0007669"/>
    <property type="project" value="TreeGrafter"/>
</dbReference>
<dbReference type="GO" id="GO:0006096">
    <property type="term" value="P:glycolytic process"/>
    <property type="evidence" value="ECO:0007669"/>
    <property type="project" value="UniProtKB-UniRule"/>
</dbReference>
<dbReference type="CDD" id="cd05015">
    <property type="entry name" value="SIS_PGI_1"/>
    <property type="match status" value="1"/>
</dbReference>
<dbReference type="CDD" id="cd05016">
    <property type="entry name" value="SIS_PGI_2"/>
    <property type="match status" value="1"/>
</dbReference>
<dbReference type="FunFam" id="3.40.50.10490:FF:000021">
    <property type="entry name" value="Glucose-6-phosphate isomerase"/>
    <property type="match status" value="1"/>
</dbReference>
<dbReference type="Gene3D" id="3.40.50.10490">
    <property type="entry name" value="Glucose-6-phosphate isomerase like protein, domain 1"/>
    <property type="match status" value="3"/>
</dbReference>
<dbReference type="HAMAP" id="MF_00473">
    <property type="entry name" value="G6P_isomerase"/>
    <property type="match status" value="1"/>
</dbReference>
<dbReference type="InterPro" id="IPR001672">
    <property type="entry name" value="G6P_Isomerase"/>
</dbReference>
<dbReference type="InterPro" id="IPR018189">
    <property type="entry name" value="Phosphoglucose_isomerase_CS"/>
</dbReference>
<dbReference type="InterPro" id="IPR046348">
    <property type="entry name" value="SIS_dom_sf"/>
</dbReference>
<dbReference type="InterPro" id="IPR035476">
    <property type="entry name" value="SIS_PGI_1"/>
</dbReference>
<dbReference type="InterPro" id="IPR035482">
    <property type="entry name" value="SIS_PGI_2"/>
</dbReference>
<dbReference type="NCBIfam" id="NF010696">
    <property type="entry name" value="PRK14096.1"/>
    <property type="match status" value="1"/>
</dbReference>
<dbReference type="PANTHER" id="PTHR11469">
    <property type="entry name" value="GLUCOSE-6-PHOSPHATE ISOMERASE"/>
    <property type="match status" value="1"/>
</dbReference>
<dbReference type="PANTHER" id="PTHR11469:SF1">
    <property type="entry name" value="GLUCOSE-6-PHOSPHATE ISOMERASE"/>
    <property type="match status" value="1"/>
</dbReference>
<dbReference type="Pfam" id="PF00342">
    <property type="entry name" value="PGI"/>
    <property type="match status" value="2"/>
</dbReference>
<dbReference type="PRINTS" id="PR00662">
    <property type="entry name" value="G6PISOMERASE"/>
</dbReference>
<dbReference type="SUPFAM" id="SSF53697">
    <property type="entry name" value="SIS domain"/>
    <property type="match status" value="1"/>
</dbReference>
<dbReference type="PROSITE" id="PS00174">
    <property type="entry name" value="P_GLUCOSE_ISOMERASE_2"/>
    <property type="match status" value="1"/>
</dbReference>
<dbReference type="PROSITE" id="PS51463">
    <property type="entry name" value="P_GLUCOSE_ISOMERASE_3"/>
    <property type="match status" value="1"/>
</dbReference>